<evidence type="ECO:0000255" key="1">
    <source>
        <dbReference type="HAMAP-Rule" id="MF_00093"/>
    </source>
</evidence>
<evidence type="ECO:0000256" key="2">
    <source>
        <dbReference type="SAM" id="MobiDB-lite"/>
    </source>
</evidence>
<comment type="function">
    <text evidence="1">Peptide chain release factor 1 directs the termination of translation in response to the peptide chain termination codons UAG and UAA.</text>
</comment>
<comment type="subcellular location">
    <subcellularLocation>
        <location evidence="1">Cytoplasm</location>
    </subcellularLocation>
</comment>
<comment type="PTM">
    <text evidence="1">Methylated by PrmC. Methylation increases the termination efficiency of RF1.</text>
</comment>
<comment type="similarity">
    <text evidence="1">Belongs to the prokaryotic/mitochondrial release factor family.</text>
</comment>
<proteinExistence type="inferred from homology"/>
<reference key="1">
    <citation type="journal article" date="2008" name="Genome Biol.">
        <title>The complete genome, comparative and functional analysis of Stenotrophomonas maltophilia reveals an organism heavily shielded by drug resistance determinants.</title>
        <authorList>
            <person name="Crossman L.C."/>
            <person name="Gould V.C."/>
            <person name="Dow J.M."/>
            <person name="Vernikos G.S."/>
            <person name="Okazaki A."/>
            <person name="Sebaihia M."/>
            <person name="Saunders D."/>
            <person name="Arrowsmith C."/>
            <person name="Carver T."/>
            <person name="Peters N."/>
            <person name="Adlem E."/>
            <person name="Kerhornou A."/>
            <person name="Lord A."/>
            <person name="Murphy L."/>
            <person name="Seeger K."/>
            <person name="Squares R."/>
            <person name="Rutter S."/>
            <person name="Quail M.A."/>
            <person name="Rajandream M.A."/>
            <person name="Harris D."/>
            <person name="Churcher C."/>
            <person name="Bentley S.D."/>
            <person name="Parkhill J."/>
            <person name="Thomson N.R."/>
            <person name="Avison M.B."/>
        </authorList>
    </citation>
    <scope>NUCLEOTIDE SEQUENCE [LARGE SCALE GENOMIC DNA]</scope>
    <source>
        <strain>K279a</strain>
    </source>
</reference>
<sequence>MTPTLRRKLEALAERREELERLLAEPDVVADNTRFRDLSREFAQLEPIAIALADESRAKADLAAAEGMRADPDLRELADEEIAAAQARLLELEQELALLLVPRDPRDEGNLFLEVRAGTGGDEAAIFAGDLFRMYARYAERQGWKVEIESDNPGEHGGYKEVVARVVGRGAFSRLKFESGTHRVQRVPATESQGRIHTSAATVAIIPEADEVDDIVINPADLKVDTFRSSGAGGQHVNKTESAIRITHVPTGVVVECQTERSQHANRDKAMKRLKAQLLDAERQRQDAAQAESRRLQVGSGDRSQRIRTYNFPQGRITDHRVEGLTLYDLPNILAGDLDPLLQRLSHEHQVDALAQLSAG</sequence>
<feature type="chain" id="PRO_1000093510" description="Peptide chain release factor 1">
    <location>
        <begin position="1"/>
        <end position="360"/>
    </location>
</feature>
<feature type="region of interest" description="Disordered" evidence="2">
    <location>
        <begin position="281"/>
        <end position="310"/>
    </location>
</feature>
<feature type="modified residue" description="N5-methylglutamine" evidence="1">
    <location>
        <position position="235"/>
    </location>
</feature>
<dbReference type="EMBL" id="AM743169">
    <property type="protein sequence ID" value="CAQ44444.1"/>
    <property type="molecule type" value="Genomic_DNA"/>
</dbReference>
<dbReference type="RefSeq" id="WP_005412330.1">
    <property type="nucleotide sequence ID" value="NC_010943.1"/>
</dbReference>
<dbReference type="SMR" id="B2FQ14"/>
<dbReference type="EnsemblBacteria" id="CAQ44444">
    <property type="protein sequence ID" value="CAQ44444"/>
    <property type="gene ID" value="Smlt0870"/>
</dbReference>
<dbReference type="KEGG" id="sml:Smlt0870"/>
<dbReference type="PATRIC" id="fig|522373.3.peg.842"/>
<dbReference type="eggNOG" id="COG0216">
    <property type="taxonomic scope" value="Bacteria"/>
</dbReference>
<dbReference type="HOGENOM" id="CLU_036856_0_1_6"/>
<dbReference type="Proteomes" id="UP000008840">
    <property type="component" value="Chromosome"/>
</dbReference>
<dbReference type="GO" id="GO:0005737">
    <property type="term" value="C:cytoplasm"/>
    <property type="evidence" value="ECO:0007669"/>
    <property type="project" value="UniProtKB-SubCell"/>
</dbReference>
<dbReference type="GO" id="GO:0016149">
    <property type="term" value="F:translation release factor activity, codon specific"/>
    <property type="evidence" value="ECO:0007669"/>
    <property type="project" value="UniProtKB-UniRule"/>
</dbReference>
<dbReference type="FunFam" id="3.30.160.20:FF:000004">
    <property type="entry name" value="Peptide chain release factor 1"/>
    <property type="match status" value="1"/>
</dbReference>
<dbReference type="FunFam" id="3.30.70.1660:FF:000002">
    <property type="entry name" value="Peptide chain release factor 1"/>
    <property type="match status" value="1"/>
</dbReference>
<dbReference type="FunFam" id="3.30.70.1660:FF:000004">
    <property type="entry name" value="Peptide chain release factor 1"/>
    <property type="match status" value="1"/>
</dbReference>
<dbReference type="Gene3D" id="3.30.160.20">
    <property type="match status" value="1"/>
</dbReference>
<dbReference type="Gene3D" id="3.30.70.1660">
    <property type="match status" value="2"/>
</dbReference>
<dbReference type="Gene3D" id="6.10.140.1950">
    <property type="match status" value="1"/>
</dbReference>
<dbReference type="HAMAP" id="MF_00093">
    <property type="entry name" value="Rel_fac_1"/>
    <property type="match status" value="1"/>
</dbReference>
<dbReference type="InterPro" id="IPR005139">
    <property type="entry name" value="PCRF"/>
</dbReference>
<dbReference type="InterPro" id="IPR000352">
    <property type="entry name" value="Pep_chain_release_fac_I"/>
</dbReference>
<dbReference type="InterPro" id="IPR045853">
    <property type="entry name" value="Pep_chain_release_fac_I_sf"/>
</dbReference>
<dbReference type="InterPro" id="IPR050057">
    <property type="entry name" value="Prokaryotic/Mito_RF"/>
</dbReference>
<dbReference type="InterPro" id="IPR004373">
    <property type="entry name" value="RF-1"/>
</dbReference>
<dbReference type="NCBIfam" id="TIGR00019">
    <property type="entry name" value="prfA"/>
    <property type="match status" value="1"/>
</dbReference>
<dbReference type="NCBIfam" id="NF001859">
    <property type="entry name" value="PRK00591.1"/>
    <property type="match status" value="1"/>
</dbReference>
<dbReference type="PANTHER" id="PTHR43804">
    <property type="entry name" value="LD18447P"/>
    <property type="match status" value="1"/>
</dbReference>
<dbReference type="PANTHER" id="PTHR43804:SF7">
    <property type="entry name" value="LD18447P"/>
    <property type="match status" value="1"/>
</dbReference>
<dbReference type="Pfam" id="PF03462">
    <property type="entry name" value="PCRF"/>
    <property type="match status" value="1"/>
</dbReference>
<dbReference type="Pfam" id="PF00472">
    <property type="entry name" value="RF-1"/>
    <property type="match status" value="1"/>
</dbReference>
<dbReference type="SMART" id="SM00937">
    <property type="entry name" value="PCRF"/>
    <property type="match status" value="1"/>
</dbReference>
<dbReference type="SUPFAM" id="SSF75620">
    <property type="entry name" value="Release factor"/>
    <property type="match status" value="1"/>
</dbReference>
<dbReference type="PROSITE" id="PS00745">
    <property type="entry name" value="RF_PROK_I"/>
    <property type="match status" value="1"/>
</dbReference>
<name>RF1_STRMK</name>
<gene>
    <name evidence="1" type="primary">prfA</name>
    <name type="ordered locus">Smlt0870</name>
</gene>
<accession>B2FQ14</accession>
<organism>
    <name type="scientific">Stenotrophomonas maltophilia (strain K279a)</name>
    <dbReference type="NCBI Taxonomy" id="522373"/>
    <lineage>
        <taxon>Bacteria</taxon>
        <taxon>Pseudomonadati</taxon>
        <taxon>Pseudomonadota</taxon>
        <taxon>Gammaproteobacteria</taxon>
        <taxon>Lysobacterales</taxon>
        <taxon>Lysobacteraceae</taxon>
        <taxon>Stenotrophomonas</taxon>
        <taxon>Stenotrophomonas maltophilia group</taxon>
    </lineage>
</organism>
<protein>
    <recommendedName>
        <fullName evidence="1">Peptide chain release factor 1</fullName>
        <shortName evidence="1">RF-1</shortName>
    </recommendedName>
</protein>
<keyword id="KW-0963">Cytoplasm</keyword>
<keyword id="KW-0488">Methylation</keyword>
<keyword id="KW-0648">Protein biosynthesis</keyword>
<keyword id="KW-1185">Reference proteome</keyword>